<evidence type="ECO:0000269" key="1">
    <source>
    </source>
</evidence>
<evidence type="ECO:0000269" key="2">
    <source>
    </source>
</evidence>
<evidence type="ECO:0000269" key="3">
    <source>
    </source>
</evidence>
<evidence type="ECO:0000269" key="4">
    <source>
    </source>
</evidence>
<evidence type="ECO:0000269" key="5">
    <source>
    </source>
</evidence>
<evidence type="ECO:0000269" key="6">
    <source>
    </source>
</evidence>
<evidence type="ECO:0000269" key="7">
    <source>
    </source>
</evidence>
<evidence type="ECO:0000269" key="8">
    <source>
    </source>
</evidence>
<evidence type="ECO:0000269" key="9">
    <source>
    </source>
</evidence>
<evidence type="ECO:0000269" key="10">
    <source>
    </source>
</evidence>
<evidence type="ECO:0000269" key="11">
    <source>
    </source>
</evidence>
<evidence type="ECO:0000269" key="12">
    <source>
    </source>
</evidence>
<evidence type="ECO:0000303" key="13">
    <source>
    </source>
</evidence>
<evidence type="ECO:0000303" key="14">
    <source>
    </source>
</evidence>
<evidence type="ECO:0007829" key="15">
    <source>
        <dbReference type="PDB" id="3HI2"/>
    </source>
</evidence>
<protein>
    <recommendedName>
        <fullName evidence="14">mRNA interferase toxin MqsR</fullName>
        <ecNumber>3.1.-.-</ecNumber>
    </recommendedName>
    <alternativeName>
        <fullName>Endoribonuclease MqsR</fullName>
    </alternativeName>
    <alternativeName>
        <fullName evidence="13">Motility quorum-sensing regulator MqsR</fullName>
    </alternativeName>
    <alternativeName>
        <fullName>Toxin MqsR</fullName>
    </alternativeName>
</protein>
<feature type="chain" id="PRO_0000169411" description="mRNA interferase toxin MqsR">
    <location>
        <begin position="1"/>
        <end position="98"/>
    </location>
</feature>
<feature type="mutagenesis site" description="No change in toxicity." evidence="6">
    <original>Y</original>
    <variation>A</variation>
    <location>
        <position position="55"/>
    </location>
</feature>
<feature type="mutagenesis site" description="Loss of toxicity." evidence="6">
    <original>K</original>
    <variation>A</variation>
    <location>
        <position position="56"/>
    </location>
</feature>
<feature type="mutagenesis site" description="No change in toxicity." evidence="6">
    <original>M</original>
    <variation>A</variation>
    <location>
        <position position="58"/>
    </location>
</feature>
<feature type="mutagenesis site" description="Loss of toxicity." evidence="6">
    <original>Q</original>
    <variation>A</variation>
    <location>
        <position position="68"/>
    </location>
</feature>
<feature type="mutagenesis site" description="No change in toxicity." evidence="6">
    <original>R</original>
    <variation>A</variation>
    <location>
        <position position="72"/>
    </location>
</feature>
<feature type="mutagenesis site" description="Loss of toxicity." evidence="6">
    <original>Y</original>
    <variation>A</variation>
    <location>
        <position position="81"/>
    </location>
</feature>
<feature type="mutagenesis site" description="Loss of toxicity." evidence="6">
    <original>K</original>
    <variation>A</variation>
    <location>
        <position position="96"/>
    </location>
</feature>
<feature type="strand" evidence="15">
    <location>
        <begin position="2"/>
        <end position="5"/>
    </location>
</feature>
<feature type="helix" evidence="15">
    <location>
        <begin position="10"/>
        <end position="18"/>
    </location>
</feature>
<feature type="strand" evidence="15">
    <location>
        <begin position="22"/>
        <end position="25"/>
    </location>
</feature>
<feature type="helix" evidence="15">
    <location>
        <begin position="26"/>
        <end position="34"/>
    </location>
</feature>
<feature type="helix" evidence="15">
    <location>
        <begin position="39"/>
        <end position="47"/>
    </location>
</feature>
<feature type="helix" evidence="15">
    <location>
        <begin position="51"/>
        <end position="53"/>
    </location>
</feature>
<feature type="strand" evidence="15">
    <location>
        <begin position="54"/>
        <end position="58"/>
    </location>
</feature>
<feature type="turn" evidence="15">
    <location>
        <begin position="62"/>
        <end position="65"/>
    </location>
</feature>
<feature type="strand" evidence="15">
    <location>
        <begin position="68"/>
        <end position="71"/>
    </location>
</feature>
<feature type="strand" evidence="15">
    <location>
        <begin position="82"/>
        <end position="87"/>
    </location>
</feature>
<feature type="strand" evidence="15">
    <location>
        <begin position="90"/>
        <end position="95"/>
    </location>
</feature>
<organism>
    <name type="scientific">Escherichia coli (strain K12)</name>
    <dbReference type="NCBI Taxonomy" id="83333"/>
    <lineage>
        <taxon>Bacteria</taxon>
        <taxon>Pseudomonadati</taxon>
        <taxon>Pseudomonadota</taxon>
        <taxon>Gammaproteobacteria</taxon>
        <taxon>Enterobacterales</taxon>
        <taxon>Enterobacteriaceae</taxon>
        <taxon>Escherichia</taxon>
    </lineage>
</organism>
<comment type="function">
    <text evidence="3 5 6 10 11 12">Toxic component of a type II toxin-antitoxin (TA) system. Plays a significant role in the control of biofilm formation and induction of persister cells in the presence of antibiotics. An mRNA interferase which has been reported to be translation-independent (PubMed:19690171, PubMed:19943910, PubMed:23289863). It has also been reported to be translation-dependent (PubMed:20041169). Cleavage has been reported to occur on either side of G in the sequence GCU (PubMed:19690171). Also reported to cleave after C in GC(A/U) sequences (PubMed:19943910). There are only 14 genes in E.coli W3110 (and probably also MG1655) that do not have a GCU sequence and thus are resistant to the mRNA interferase activity; among these is the gene for toxin GhoT. Overexpression of MqsR causes cessation of cell growth and inhibits cell proliferation via inhibition of translation as well as increasing persister cell formation; these effects are overcome by concomitant or subsequent expression of antitoxin MqsA. Cross-talk can occur between different TA systems. Ectopic expression of this toxin induces transcription of the relBEF TA system operon with specific cleavage of the relBEF mRNA produced (PubMed:23432955). Regulates the expression of GhoT/GhoS, a type V TA system (PubMed:23289863). Persistence depends on toxin GhoT activity, which MqsR controls at the post-transcriptional level by selectively degrading the antitoxin ghoS segment of the ghoST mRNA (PubMed:23289863). Overexpression leads to a dramatic increase in tolerance to the antibiotic ofloxacin. This TA system mediates cell growth during bile acid deoxycholate stress by degrading mRNA for probable deoxycholate-binding protein YgiS; bile acid detergents such as deoxycholate are important for host defense against bacterial growth in the gall bladder and duodenum (PubMed:25534751).</text>
</comment>
<comment type="function">
    <text evidence="3 7 9">Initially reported to act as a cotranscription factor with MqsA (PubMed:19690171, PubMed:20105222). Following further experiments, the MqsR-MqsA complex does not bind DNA and all reported data are actually due to a small fraction of free MqsA alone binding DNA. Addition of MqsR to a preformed MqsA-promoter DNA complex causes dissociation of the MqsA-DNA complex, probably causing derepression of MqsA-repressed transcripts. Does not bind DNA in the presence or absence of MqsA (PubMed:23172222).</text>
</comment>
<comment type="biophysicochemical properties">
    <temperatureDependence>
        <text evidence="9">The MqsR-MqsA complex is exceptionally thermostable with a Tm of 83.4 degress Celsius versus 48.1 degress Celsius for MqsR and 61.1 degress Celsius for MqsA.</text>
    </temperatureDependence>
</comment>
<comment type="subunit">
    <text evidence="3 6 9">Might be a dimer (PubMed:19690171). Also reported to be a monomer (PubMed:23172222). Crystallizes as a heterotetramer with MqsA, MqsR-MqsA(2)-MqsR (PubMed:20041169). Purifies as a possible heterohexamer of 2 MqsR dimers and 1 MqsA dimer (PubMed:19690171). When the 2 dissociate the MsqR mRNA interferase becomes active.</text>
</comment>
<comment type="induction">
    <text evidence="2 7 9 10 11 14">Induced by amino acid starvation, glucose starvation and when translation is blocked. Also induced by nalidixic acid, azolocillin and H(2)O(2) (PubMed:23289863). It has been suggested that MqsA represses its own operon (PubMed:19690171). Induction is decreased in the absence of the Lon protease suggesting, by homology to other toxin-antitoxin systems, that Lon may degrade the MqsA antitoxin. Transcription is activated by MqsA (PubMed:20105222). A member of the mqsRA operon. Most highly induced gene in persister cells (PubMed:16768798). Degrades its own transcript (PubMed:23172222). This operon induced by ectopic expression of toxins RelE, HicA and YafQ but not by MazF or HicA (PubMed:23432955).</text>
</comment>
<comment type="disruption phenotype">
    <text evidence="1 2 4 7 8 12">No loss of ability to form persister cells in MG1655, represses persister cell formation in BW25113. Deletion decreases biofilm formation in LB medium (PubMed:16352847). Deletion has also been shown to increase biofilm formation (PubMed:20105222). Deletion at 48h, in flow cells, leads to a reduction in biomass, substratum coverage and changes the biofilm architecture from a 54 micron thick film with microcolonies to one with nearly no biomass and only a few colonies remaining. Deletion abolishes motility. A double mqsR-mqsA deletion leads to increased rpoS mRNA levels, resulting in increased cyclic-di-GMP levels, increasing stress resistance, increased biofilm formation (PubMed:21516113). The double mutant has increased metabolism and respiration in the presence of the bile acid deoxycholate and consequently grows less well. Decreases cell survival in the presence of 20% deoxycholate (PubMed:25534751).</text>
</comment>
<gene>
    <name evidence="13" type="primary">mqsR</name>
    <name type="synonym">ygiU</name>
    <name type="ordered locus">b3022</name>
    <name type="ordered locus">JW2990</name>
</gene>
<reference key="1">
    <citation type="journal article" date="1997" name="Science">
        <title>The complete genome sequence of Escherichia coli K-12.</title>
        <authorList>
            <person name="Blattner F.R."/>
            <person name="Plunkett G. III"/>
            <person name="Bloch C.A."/>
            <person name="Perna N.T."/>
            <person name="Burland V."/>
            <person name="Riley M."/>
            <person name="Collado-Vides J."/>
            <person name="Glasner J.D."/>
            <person name="Rode C.K."/>
            <person name="Mayhew G.F."/>
            <person name="Gregor J."/>
            <person name="Davis N.W."/>
            <person name="Kirkpatrick H.A."/>
            <person name="Goeden M.A."/>
            <person name="Rose D.J."/>
            <person name="Mau B."/>
            <person name="Shao Y."/>
        </authorList>
    </citation>
    <scope>NUCLEOTIDE SEQUENCE [LARGE SCALE GENOMIC DNA]</scope>
    <source>
        <strain>K12 / MG1655 / ATCC 47076</strain>
    </source>
</reference>
<reference key="2">
    <citation type="journal article" date="2006" name="Mol. Syst. Biol.">
        <title>Highly accurate genome sequences of Escherichia coli K-12 strains MG1655 and W3110.</title>
        <authorList>
            <person name="Hayashi K."/>
            <person name="Morooka N."/>
            <person name="Yamamoto Y."/>
            <person name="Fujita K."/>
            <person name="Isono K."/>
            <person name="Choi S."/>
            <person name="Ohtsubo E."/>
            <person name="Baba T."/>
            <person name="Wanner B.L."/>
            <person name="Mori H."/>
            <person name="Horiuchi T."/>
        </authorList>
    </citation>
    <scope>NUCLEOTIDE SEQUENCE [LARGE SCALE GENOMIC DNA]</scope>
    <source>
        <strain>K12 / W3110 / ATCC 27325 / DSM 5911</strain>
    </source>
</reference>
<reference key="3">
    <citation type="journal article" date="2006" name="BMC Microbiol.">
        <title>Persisters: a distinct physiological state of E. coli.</title>
        <authorList>
            <person name="Shah D."/>
            <person name="Zhang Z."/>
            <person name="Khodursky A."/>
            <person name="Kaldalu N."/>
            <person name="Kurg K."/>
            <person name="Lewis K."/>
        </authorList>
    </citation>
    <scope>IDENTIFICATION AS A TOXIN-ANTITOXIN SYSTEM</scope>
    <scope>INDUCTION IN PERSISTER CELLS</scope>
    <scope>DISRUPTION PHENOTYPE</scope>
    <source>
        <strain>K12</strain>
    </source>
</reference>
<reference key="4">
    <citation type="journal article" date="2006" name="J. Bacteriol.">
        <title>Autoinducer 2 controls biofilm formation in Escherichia coli through a novel motility quorum-sensing regulator (MqsR, B3022).</title>
        <authorList>
            <person name="Gonzalez Barrios A.F."/>
            <person name="Zuo R."/>
            <person name="Hashimoto Y."/>
            <person name="Yang L."/>
            <person name="Bentley W.E."/>
            <person name="Wood T.K."/>
        </authorList>
    </citation>
    <scope>FUNCTION AS A REGULATOR OF BIOFILM FORMATION</scope>
    <scope>DISRUPTION PHENOTYPE</scope>
    <source>
        <strain>K12 / ATCC 25404 / DSM 5698 / NCIMB 11290</strain>
        <strain>K12 / DH5-alpha</strain>
        <strain>K12 / W3110 / ATCC 27325 / DSM 5911</strain>
    </source>
</reference>
<reference key="5">
    <citation type="journal article" date="2009" name="J. Biol. Chem.">
        <title>MqsR, a crucial regulator for quorum sensing and biofilm formation, is a GCU-specific mRNA interferase in Escherichia coli.</title>
        <authorList>
            <person name="Yamaguchi Y."/>
            <person name="Park J.H."/>
            <person name="Inouye M."/>
        </authorList>
    </citation>
    <scope>FUNCTION AS AN MRNA INTERFERASE</scope>
    <scope>FUNCTION AS A TRANSCRIPTIONAL REGULATOR</scope>
    <scope>SUBUNIT</scope>
    <scope>ACTIVITY REGULATION</scope>
    <scope>OPERON STRUCTURE</scope>
</reference>
<reference key="6">
    <citation type="journal article" date="2010" name="Biochem. Biophys. Res. Commun.">
        <title>Toxins Hha and CspD and small RNA regulator Hfq are involved in persister cell formation through MqsR in Escherichia coli.</title>
        <authorList>
            <person name="Kim Y."/>
            <person name="Wood T.K."/>
        </authorList>
    </citation>
    <scope>FUNCTION IN PERSISTER CELL FORMATION</scope>
    <scope>DISRUPTION PHENOTYPE</scope>
    <source>
        <strain>K12 / BW25113</strain>
    </source>
</reference>
<reference key="7">
    <citation type="journal article" date="2010" name="Environ. Microbiol.">
        <title>Escherichia coli toxin/antitoxin pair MqsR/MqsA regulate toxin CspD.</title>
        <authorList>
            <person name="Kim Y."/>
            <person name="Wang X."/>
            <person name="Zhang X.S."/>
            <person name="Grigoriu S."/>
            <person name="Page R."/>
            <person name="Peti W."/>
            <person name="Wood T.K."/>
        </authorList>
    </citation>
    <scope>FUNCTION AS AN MRNA INTERFERASE</scope>
    <scope>FUNCTION AS A TRANSCRIPTION REGULATOR</scope>
    <scope>INDUCTION</scope>
    <scope>DISRUPTION PHENOTYPE</scope>
    <source>
        <strain>K12 / BW25113</strain>
        <strain>K12 / MG1655 / ATCC 47076</strain>
    </source>
</reference>
<reference key="8">
    <citation type="journal article" date="2010" name="Mol. Microbiol.">
        <title>Three new RelE-homologous mRNA interferases of Escherichia coli differentially induced by environmental stresses.</title>
        <authorList>
            <person name="Christensen-Dalsgaard M."/>
            <person name="Jorgensen M.G."/>
            <person name="Gerdes K."/>
        </authorList>
    </citation>
    <scope>FUNCTION AS AN MRNA INTERFERASE</scope>
    <scope>INDUCTION</scope>
    <scope>OPERON STRUCTURE</scope>
    <source>
        <strain>K12 / MG1655 / ATCC 47076</strain>
    </source>
</reference>
<reference key="9">
    <citation type="journal article" date="2011" name="Nat. Chem. Biol.">
        <title>Antitoxin MqsA helps mediate the bacterial general stress response.</title>
        <authorList>
            <person name="Wang X."/>
            <person name="Kim Y."/>
            <person name="Hong S.H."/>
            <person name="Ma Q."/>
            <person name="Brown B.L."/>
            <person name="Pu M."/>
            <person name="Tarone A.M."/>
            <person name="Benedik M.J."/>
            <person name="Peti W."/>
            <person name="Page R."/>
            <person name="Wood T.K."/>
        </authorList>
    </citation>
    <scope>FUNCTION</scope>
    <scope>DISRUPTION PHENOTYPE</scope>
    <source>
        <strain>K12 / MG1655 / ATCC 47076</strain>
    </source>
</reference>
<reference key="10">
    <citation type="journal article" date="2011" name="Proc. Natl. Acad. Sci. U.S.A.">
        <title>Bacterial persistence by RNA endonucleases.</title>
        <authorList>
            <person name="Maisonneuve E."/>
            <person name="Shakespeare L.J."/>
            <person name="Joergensen M.G."/>
            <person name="Gerdes K."/>
        </authorList>
    </citation>
    <scope>RETRACTED PAPER</scope>
    <source>
        <strain>K12 / MG1655 / ATCC 47076</strain>
    </source>
</reference>
<reference key="11">
    <citation type="journal article" date="2018" name="Proc. Natl. Acad. Sci. U.S.A.">
        <authorList>
            <person name="Maisonneuve E."/>
            <person name="Shakespeare L.J."/>
            <person name="Joergensen M.G."/>
            <person name="Gerdes K."/>
        </authorList>
    </citation>
    <scope>RETRACTION NOTICE OF PUBMED:21788497</scope>
</reference>
<reference key="12">
    <citation type="journal article" date="2013" name="BMC Microbiol.">
        <title>Transcriptional cross-activation between toxin-antitoxin systems of Escherichia coli.</title>
        <authorList>
            <person name="Kasari V."/>
            <person name="Mets T."/>
            <person name="Tenson T."/>
            <person name="Kaldalu N."/>
        </authorList>
    </citation>
    <scope>FUNCTION</scope>
    <scope>INDUCTION BY OTHER TA SYSTEMS</scope>
    <source>
        <strain>K12 / BW25113</strain>
    </source>
</reference>
<reference key="13">
    <citation type="journal article" date="2013" name="Environ. Microbiol.">
        <title>Type II toxin/antitoxin MqsR/MqsA controls type V toxin/antitoxin GhoT/GhoS.</title>
        <authorList>
            <person name="Wang X."/>
            <person name="Lord D.M."/>
            <person name="Hong S.H."/>
            <person name="Peti W."/>
            <person name="Benedik M.J."/>
            <person name="Page R."/>
            <person name="Wood T.K."/>
        </authorList>
    </citation>
    <scope>FUNCTION</scope>
    <scope>INDUCTION</scope>
    <source>
        <strain>K12 / BW25113</strain>
    </source>
</reference>
<reference key="14">
    <citation type="journal article" date="2013" name="J. Biol. Chem.">
        <title>The Escherichia coli toxin MqsR destabilizes the transcriptional repression complex formed between the antitoxin MqsA and the mqsRA operon promoter.</title>
        <authorList>
            <person name="Brown B.L."/>
            <person name="Lord D.M."/>
            <person name="Grigoriu S."/>
            <person name="Peti W."/>
            <person name="Page R."/>
        </authorList>
    </citation>
    <scope>FUNCTION</scope>
    <scope>BIOPHYSICOCHEMICAL PROPERTIES</scope>
    <scope>INDUCTION</scope>
    <scope>LACK OF DNA-BINDING</scope>
</reference>
<reference key="15">
    <citation type="journal article" date="2015" name="Environ. Microbiol.">
        <title>The MqsR/MqsA toxin/antitoxin system protects Escherichia coli during bile acid stress.</title>
        <authorList>
            <person name="Kwan B.W."/>
            <person name="Lord D.M."/>
            <person name="Peti W."/>
            <person name="Page R."/>
            <person name="Benedik M.J."/>
            <person name="Wood T.K."/>
        </authorList>
    </citation>
    <scope>FUNCTION</scope>
    <scope>DISRUPTION PHENOTYPE</scope>
    <source>
        <strain>K12 / BW25113</strain>
    </source>
</reference>
<reference key="16">
    <citation type="journal article" date="2009" name="PLoS Pathog.">
        <title>Three dimensional structure of the MqsR:MqsA complex: a novel TA pair comprised of a toxin homologous to RelE and an antitoxin with unique properties.</title>
        <authorList>
            <person name="Brown B.L."/>
            <person name="Grigoriu S."/>
            <person name="Kim Y."/>
            <person name="Arruda J.M."/>
            <person name="Davenport A."/>
            <person name="Wood T.K."/>
            <person name="Peti W."/>
            <person name="Page R."/>
        </authorList>
    </citation>
    <scope>X-RAY CRYSTALLOGRAPHY (2.0 ANGSTROMS) IN COMPLEX WITH MQSA</scope>
    <scope>FUNCTION AS AN MRNA INTERFERASE</scope>
    <scope>SUBUNIT</scope>
    <scope>MUTAGENESIS OF TYR-55; LYS-56; MET-58; GLN-68; ARG-72; TYR-81 AND LYS-96</scope>
    <source>
        <strain>K12</strain>
    </source>
</reference>
<dbReference type="EC" id="3.1.-.-"/>
<dbReference type="EMBL" id="U28377">
    <property type="protein sequence ID" value="AAA69190.1"/>
    <property type="molecule type" value="Genomic_DNA"/>
</dbReference>
<dbReference type="EMBL" id="U00096">
    <property type="protein sequence ID" value="AAC76058.1"/>
    <property type="molecule type" value="Genomic_DNA"/>
</dbReference>
<dbReference type="EMBL" id="AP009048">
    <property type="protein sequence ID" value="BAE77078.1"/>
    <property type="molecule type" value="Genomic_DNA"/>
</dbReference>
<dbReference type="PIR" id="D65089">
    <property type="entry name" value="D65089"/>
</dbReference>
<dbReference type="RefSeq" id="NP_417494.1">
    <property type="nucleotide sequence ID" value="NC_000913.3"/>
</dbReference>
<dbReference type="RefSeq" id="WP_000415584.1">
    <property type="nucleotide sequence ID" value="NZ_SSZK01000023.1"/>
</dbReference>
<dbReference type="PDB" id="3HI2">
    <property type="method" value="X-ray"/>
    <property type="resolution" value="2.00 A"/>
    <property type="chains" value="B/D=1-98"/>
</dbReference>
<dbReference type="PDBsum" id="3HI2"/>
<dbReference type="SMR" id="Q46865"/>
<dbReference type="BioGRID" id="4260831">
    <property type="interactions" value="141"/>
</dbReference>
<dbReference type="ComplexPortal" id="CPX-1084">
    <property type="entry name" value="MqsRA toxin-antitoxin complex"/>
</dbReference>
<dbReference type="FunCoup" id="Q46865">
    <property type="interactions" value="20"/>
</dbReference>
<dbReference type="IntAct" id="Q46865">
    <property type="interactions" value="10"/>
</dbReference>
<dbReference type="STRING" id="511145.b3022"/>
<dbReference type="PaxDb" id="511145-b3022"/>
<dbReference type="EnsemblBacteria" id="AAC76058">
    <property type="protein sequence ID" value="AAC76058"/>
    <property type="gene ID" value="b3022"/>
</dbReference>
<dbReference type="GeneID" id="947500"/>
<dbReference type="KEGG" id="ecj:JW2990"/>
<dbReference type="KEGG" id="eco:b3022"/>
<dbReference type="KEGG" id="ecoc:C3026_16510"/>
<dbReference type="PATRIC" id="fig|1411691.4.peg.3708"/>
<dbReference type="EchoBASE" id="EB2841"/>
<dbReference type="eggNOG" id="ENOG5032TA0">
    <property type="taxonomic scope" value="Bacteria"/>
</dbReference>
<dbReference type="HOGENOM" id="CLU_161157_0_0_6"/>
<dbReference type="InParanoid" id="Q46865"/>
<dbReference type="OMA" id="WQDVYHG"/>
<dbReference type="OrthoDB" id="8611934at2"/>
<dbReference type="BioCyc" id="EcoCyc:G7572-MONOMER"/>
<dbReference type="BioCyc" id="MetaCyc:G7572-MONOMER"/>
<dbReference type="EvolutionaryTrace" id="Q46865"/>
<dbReference type="PRO" id="PR:Q46865"/>
<dbReference type="Proteomes" id="UP000000625">
    <property type="component" value="Chromosome"/>
</dbReference>
<dbReference type="GO" id="GO:0110001">
    <property type="term" value="C:toxin-antitoxin complex"/>
    <property type="evidence" value="ECO:0000353"/>
    <property type="project" value="ComplexPortal"/>
</dbReference>
<dbReference type="GO" id="GO:0004521">
    <property type="term" value="F:RNA endonuclease activity"/>
    <property type="evidence" value="ECO:0000314"/>
    <property type="project" value="EcoCyc"/>
</dbReference>
<dbReference type="GO" id="GO:0016892">
    <property type="term" value="F:RNA endonuclease activity, producing 3'-phosphomonoesters"/>
    <property type="evidence" value="ECO:0000314"/>
    <property type="project" value="EcoCyc"/>
</dbReference>
<dbReference type="GO" id="GO:0061157">
    <property type="term" value="P:mRNA destabilization"/>
    <property type="evidence" value="ECO:0000314"/>
    <property type="project" value="EcoCyc"/>
</dbReference>
<dbReference type="GO" id="GO:0045892">
    <property type="term" value="P:negative regulation of DNA-templated transcription"/>
    <property type="evidence" value="ECO:0000315"/>
    <property type="project" value="CACAO"/>
</dbReference>
<dbReference type="GO" id="GO:0017148">
    <property type="term" value="P:negative regulation of translation"/>
    <property type="evidence" value="ECO:0000314"/>
    <property type="project" value="EcoCyc"/>
</dbReference>
<dbReference type="GO" id="GO:0009372">
    <property type="term" value="P:quorum sensing"/>
    <property type="evidence" value="ECO:0007669"/>
    <property type="project" value="UniProtKB-KW"/>
</dbReference>
<dbReference type="GO" id="GO:2000145">
    <property type="term" value="P:regulation of cell motility"/>
    <property type="evidence" value="ECO:0000315"/>
    <property type="project" value="CACAO"/>
</dbReference>
<dbReference type="GO" id="GO:0006355">
    <property type="term" value="P:regulation of DNA-templated transcription"/>
    <property type="evidence" value="ECO:0000303"/>
    <property type="project" value="ComplexPortal"/>
</dbReference>
<dbReference type="GO" id="GO:0043488">
    <property type="term" value="P:regulation of mRNA stability"/>
    <property type="evidence" value="ECO:0000314"/>
    <property type="project" value="EcoCyc"/>
</dbReference>
<dbReference type="GO" id="GO:0044010">
    <property type="term" value="P:single-species biofilm formation"/>
    <property type="evidence" value="ECO:0000314"/>
    <property type="project" value="ComplexPortal"/>
</dbReference>
<dbReference type="CDD" id="cd12869">
    <property type="entry name" value="MqsR"/>
    <property type="match status" value="1"/>
</dbReference>
<dbReference type="Gene3D" id="3.30.2310.40">
    <property type="match status" value="1"/>
</dbReference>
<dbReference type="InterPro" id="IPR038493">
    <property type="entry name" value="MqsR_sf"/>
</dbReference>
<dbReference type="InterPro" id="IPR031451">
    <property type="entry name" value="MqsR_toxin"/>
</dbReference>
<dbReference type="Pfam" id="PF15723">
    <property type="entry name" value="MqsR_toxin"/>
    <property type="match status" value="1"/>
</dbReference>
<keyword id="KW-0002">3D-structure</keyword>
<keyword id="KW-0255">Endonuclease</keyword>
<keyword id="KW-0378">Hydrolase</keyword>
<keyword id="KW-0540">Nuclease</keyword>
<keyword id="KW-0673">Quorum sensing</keyword>
<keyword id="KW-1185">Reference proteome</keyword>
<keyword id="KW-0346">Stress response</keyword>
<keyword id="KW-1277">Toxin-antitoxin system</keyword>
<keyword id="KW-0804">Transcription</keyword>
<keyword id="KW-0805">Transcription regulation</keyword>
<proteinExistence type="evidence at protein level"/>
<accession>Q46865</accession>
<accession>Q2M9H8</accession>
<sequence length="98" mass="11232">MEKRTPHTRLSQVKKLVNAGQVRTTRSALLNADELGLDFDGMCNVIIGLSESDFYKSMTTYSDHTIWQDVYRPRLVTGQVYLKITVIHDVLIVSFKEK</sequence>
<name>MQSR_ECOLI</name>